<reference key="1">
    <citation type="journal article" date="2002" name="Nucleic Acids Res.">
        <title>Genome sequence of Shigella flexneri 2a: insights into pathogenicity through comparison with genomes of Escherichia coli K12 and O157.</title>
        <authorList>
            <person name="Jin Q."/>
            <person name="Yuan Z."/>
            <person name="Xu J."/>
            <person name="Wang Y."/>
            <person name="Shen Y."/>
            <person name="Lu W."/>
            <person name="Wang J."/>
            <person name="Liu H."/>
            <person name="Yang J."/>
            <person name="Yang F."/>
            <person name="Zhang X."/>
            <person name="Zhang J."/>
            <person name="Yang G."/>
            <person name="Wu H."/>
            <person name="Qu D."/>
            <person name="Dong J."/>
            <person name="Sun L."/>
            <person name="Xue Y."/>
            <person name="Zhao A."/>
            <person name="Gao Y."/>
            <person name="Zhu J."/>
            <person name="Kan B."/>
            <person name="Ding K."/>
            <person name="Chen S."/>
            <person name="Cheng H."/>
            <person name="Yao Z."/>
            <person name="He B."/>
            <person name="Chen R."/>
            <person name="Ma D."/>
            <person name="Qiang B."/>
            <person name="Wen Y."/>
            <person name="Hou Y."/>
            <person name="Yu J."/>
        </authorList>
    </citation>
    <scope>NUCLEOTIDE SEQUENCE [LARGE SCALE GENOMIC DNA]</scope>
    <source>
        <strain>301 / Serotype 2a</strain>
    </source>
</reference>
<reference key="2">
    <citation type="journal article" date="2003" name="Infect. Immun.">
        <title>Complete genome sequence and comparative genomics of Shigella flexneri serotype 2a strain 2457T.</title>
        <authorList>
            <person name="Wei J."/>
            <person name="Goldberg M.B."/>
            <person name="Burland V."/>
            <person name="Venkatesan M.M."/>
            <person name="Deng W."/>
            <person name="Fournier G."/>
            <person name="Mayhew G.F."/>
            <person name="Plunkett G. III"/>
            <person name="Rose D.J."/>
            <person name="Darling A."/>
            <person name="Mau B."/>
            <person name="Perna N.T."/>
            <person name="Payne S.M."/>
            <person name="Runyen-Janecky L.J."/>
            <person name="Zhou S."/>
            <person name="Schwartz D.C."/>
            <person name="Blattner F.R."/>
        </authorList>
    </citation>
    <scope>NUCLEOTIDE SEQUENCE [LARGE SCALE GENOMIC DNA]</scope>
    <source>
        <strain>ATCC 700930 / 2457T / Serotype 2a</strain>
    </source>
</reference>
<evidence type="ECO:0000255" key="1">
    <source>
        <dbReference type="HAMAP-Rule" id="MF_02207"/>
    </source>
</evidence>
<evidence type="ECO:0000305" key="2"/>
<accession>P0A9X8</accession>
<accession>P13519</accession>
<accession>P76678</accession>
<sequence>MLKKFRGMFSNDLSIDLGTANTLIYVKGQGIVLNEPSVVAIRQDRAGSPKSVAAVGHDAKQMLGRTPGNIAAIRPMKDGVIADFFVTEKMLQHFIKQVHSNSFMRPSPRVLVCVPVGATQVERRAIRESAQGAGAREVFLIEEPMAAAIGAGLPVSEATGSMVVDIGGGTTEVAVISLNGVVYSSSVRIGGDRFDEAIINYVRRNYGSLIGEATAERIKHEIGSAYPGDEVREIEVRGRNLAEGVPRGFTLNSNEILEALQEPLTGIVSAVMVALEQCPPELASDISERGMVLTGGGALLRNLDRLLMEETGIPVVVAEDPLTCVARGGGKALEMIDMHGGDLFSEE</sequence>
<comment type="function">
    <text evidence="1">Forms membrane-associated dynamic filaments that are essential for cell shape determination. Acts by regulating cell wall synthesis and cell elongation, and thus cell shape. A feedback loop between cell geometry and MreB localization may maintain elongated cell shape by targeting cell wall growth to regions of negative cell wall curvature.</text>
</comment>
<comment type="subunit">
    <text evidence="1">Forms polymers.</text>
</comment>
<comment type="subcellular location">
    <subcellularLocation>
        <location evidence="1">Cytoplasm</location>
    </subcellularLocation>
    <text evidence="1">Membrane-associated.</text>
</comment>
<comment type="similarity">
    <text evidence="1 2">Belongs to the FtsA/MreB family.</text>
</comment>
<comment type="sequence caution" evidence="2">
    <conflict type="erroneous initiation">
        <sequence resource="EMBL-CDS" id="AAN44753"/>
    </conflict>
    <text>Extended N-terminus.</text>
</comment>
<comment type="sequence caution" evidence="2">
    <conflict type="erroneous initiation">
        <sequence resource="EMBL-CDS" id="AAP18564"/>
    </conflict>
    <text>Extended N-terminus.</text>
</comment>
<organism>
    <name type="scientific">Shigella flexneri</name>
    <dbReference type="NCBI Taxonomy" id="623"/>
    <lineage>
        <taxon>Bacteria</taxon>
        <taxon>Pseudomonadati</taxon>
        <taxon>Pseudomonadota</taxon>
        <taxon>Gammaproteobacteria</taxon>
        <taxon>Enterobacterales</taxon>
        <taxon>Enterobacteriaceae</taxon>
        <taxon>Shigella</taxon>
    </lineage>
</organism>
<protein>
    <recommendedName>
        <fullName evidence="1">Cell shape-determining protein MreB</fullName>
    </recommendedName>
</protein>
<feature type="chain" id="PRO_0000062765" description="Cell shape-determining protein MreB">
    <location>
        <begin position="1"/>
        <end position="347"/>
    </location>
</feature>
<feature type="binding site" evidence="1">
    <location>
        <begin position="19"/>
        <end position="21"/>
    </location>
    <ligand>
        <name>ATP</name>
        <dbReference type="ChEBI" id="CHEBI:30616"/>
    </ligand>
</feature>
<feature type="binding site" evidence="1">
    <location>
        <begin position="168"/>
        <end position="170"/>
    </location>
    <ligand>
        <name>ATP</name>
        <dbReference type="ChEBI" id="CHEBI:30616"/>
    </ligand>
</feature>
<feature type="binding site" evidence="1">
    <location>
        <begin position="216"/>
        <end position="219"/>
    </location>
    <ligand>
        <name>ATP</name>
        <dbReference type="ChEBI" id="CHEBI:30616"/>
    </ligand>
</feature>
<feature type="binding site" evidence="1">
    <location>
        <begin position="296"/>
        <end position="299"/>
    </location>
    <ligand>
        <name>ATP</name>
        <dbReference type="ChEBI" id="CHEBI:30616"/>
    </ligand>
</feature>
<gene>
    <name evidence="1" type="primary">mreB</name>
    <name type="ordered locus">SF3289</name>
    <name type="ordered locus">S3506</name>
</gene>
<proteinExistence type="inferred from homology"/>
<dbReference type="EMBL" id="AE005674">
    <property type="protein sequence ID" value="AAN44753.2"/>
    <property type="status" value="ALT_INIT"/>
    <property type="molecule type" value="Genomic_DNA"/>
</dbReference>
<dbReference type="EMBL" id="AE014073">
    <property type="protein sequence ID" value="AAP18564.1"/>
    <property type="status" value="ALT_INIT"/>
    <property type="molecule type" value="Genomic_DNA"/>
</dbReference>
<dbReference type="RefSeq" id="NP_709046.4">
    <property type="nucleotide sequence ID" value="NC_004337.2"/>
</dbReference>
<dbReference type="RefSeq" id="WP_000913396.1">
    <property type="nucleotide sequence ID" value="NZ_WPGW01000026.1"/>
</dbReference>
<dbReference type="SMR" id="P0A9X8"/>
<dbReference type="STRING" id="198214.SF3289"/>
<dbReference type="PaxDb" id="198214-SF3289"/>
<dbReference type="GeneID" id="1026494"/>
<dbReference type="GeneID" id="98390376"/>
<dbReference type="KEGG" id="sfl:SF3289"/>
<dbReference type="KEGG" id="sfx:S3506"/>
<dbReference type="PATRIC" id="fig|198214.7.peg.3896"/>
<dbReference type="HOGENOM" id="CLU_052037_0_0_6"/>
<dbReference type="Proteomes" id="UP000001006">
    <property type="component" value="Chromosome"/>
</dbReference>
<dbReference type="Proteomes" id="UP000002673">
    <property type="component" value="Chromosome"/>
</dbReference>
<dbReference type="GO" id="GO:0005737">
    <property type="term" value="C:cytoplasm"/>
    <property type="evidence" value="ECO:0007669"/>
    <property type="project" value="UniProtKB-SubCell"/>
</dbReference>
<dbReference type="GO" id="GO:0005524">
    <property type="term" value="F:ATP binding"/>
    <property type="evidence" value="ECO:0007669"/>
    <property type="project" value="UniProtKB-KW"/>
</dbReference>
<dbReference type="GO" id="GO:0000902">
    <property type="term" value="P:cell morphogenesis"/>
    <property type="evidence" value="ECO:0007669"/>
    <property type="project" value="InterPro"/>
</dbReference>
<dbReference type="GO" id="GO:0008360">
    <property type="term" value="P:regulation of cell shape"/>
    <property type="evidence" value="ECO:0007669"/>
    <property type="project" value="UniProtKB-UniRule"/>
</dbReference>
<dbReference type="CDD" id="cd10225">
    <property type="entry name" value="ASKHA_NBD_MreB-like"/>
    <property type="match status" value="1"/>
</dbReference>
<dbReference type="FunFam" id="3.30.420.40:FF:000014">
    <property type="entry name" value="Rod shape-determining protein MreB"/>
    <property type="match status" value="1"/>
</dbReference>
<dbReference type="FunFam" id="3.30.420.40:FF:000019">
    <property type="entry name" value="Rod shape-determining protein MreB"/>
    <property type="match status" value="1"/>
</dbReference>
<dbReference type="FunFam" id="3.30.420.40:FF:000016">
    <property type="entry name" value="Rod shape-determining protein mreB"/>
    <property type="match status" value="1"/>
</dbReference>
<dbReference type="Gene3D" id="3.30.420.40">
    <property type="match status" value="3"/>
</dbReference>
<dbReference type="HAMAP" id="MF_02207">
    <property type="entry name" value="MreB"/>
    <property type="match status" value="1"/>
</dbReference>
<dbReference type="InterPro" id="IPR043129">
    <property type="entry name" value="ATPase_NBD"/>
</dbReference>
<dbReference type="InterPro" id="IPR004753">
    <property type="entry name" value="MreB"/>
</dbReference>
<dbReference type="InterPro" id="IPR056546">
    <property type="entry name" value="MreB_MamK-like"/>
</dbReference>
<dbReference type="NCBIfam" id="TIGR00904">
    <property type="entry name" value="mreB"/>
    <property type="match status" value="1"/>
</dbReference>
<dbReference type="NCBIfam" id="NF010539">
    <property type="entry name" value="PRK13927.1"/>
    <property type="match status" value="1"/>
</dbReference>
<dbReference type="PANTHER" id="PTHR42749">
    <property type="entry name" value="CELL SHAPE-DETERMINING PROTEIN MREB"/>
    <property type="match status" value="1"/>
</dbReference>
<dbReference type="PANTHER" id="PTHR42749:SF1">
    <property type="entry name" value="CELL SHAPE-DETERMINING PROTEIN MREB"/>
    <property type="match status" value="1"/>
</dbReference>
<dbReference type="Pfam" id="PF06723">
    <property type="entry name" value="MreB_Mbl"/>
    <property type="match status" value="1"/>
</dbReference>
<dbReference type="PRINTS" id="PR01652">
    <property type="entry name" value="SHAPEPROTEIN"/>
</dbReference>
<dbReference type="SUPFAM" id="SSF53067">
    <property type="entry name" value="Actin-like ATPase domain"/>
    <property type="match status" value="2"/>
</dbReference>
<name>MREB_SHIFL</name>
<keyword id="KW-0067">ATP-binding</keyword>
<keyword id="KW-0133">Cell shape</keyword>
<keyword id="KW-0963">Cytoplasm</keyword>
<keyword id="KW-0547">Nucleotide-binding</keyword>
<keyword id="KW-1185">Reference proteome</keyword>